<feature type="chain" id="PRO_1000203926" description="Threonine--tRNA ligase">
    <location>
        <begin position="1"/>
        <end position="637"/>
    </location>
</feature>
<feature type="domain" description="TGS" evidence="2">
    <location>
        <begin position="1"/>
        <end position="61"/>
    </location>
</feature>
<feature type="region of interest" description="Catalytic" evidence="1">
    <location>
        <begin position="242"/>
        <end position="533"/>
    </location>
</feature>
<feature type="binding site" evidence="1">
    <location>
        <position position="333"/>
    </location>
    <ligand>
        <name>Zn(2+)</name>
        <dbReference type="ChEBI" id="CHEBI:29105"/>
    </ligand>
</feature>
<feature type="binding site" evidence="1">
    <location>
        <position position="384"/>
    </location>
    <ligand>
        <name>Zn(2+)</name>
        <dbReference type="ChEBI" id="CHEBI:29105"/>
    </ligand>
</feature>
<feature type="binding site" evidence="1">
    <location>
        <position position="510"/>
    </location>
    <ligand>
        <name>Zn(2+)</name>
        <dbReference type="ChEBI" id="CHEBI:29105"/>
    </ligand>
</feature>
<keyword id="KW-0030">Aminoacyl-tRNA synthetase</keyword>
<keyword id="KW-0067">ATP-binding</keyword>
<keyword id="KW-0963">Cytoplasm</keyword>
<keyword id="KW-0436">Ligase</keyword>
<keyword id="KW-0479">Metal-binding</keyword>
<keyword id="KW-0547">Nucleotide-binding</keyword>
<keyword id="KW-0648">Protein biosynthesis</keyword>
<keyword id="KW-1185">Reference proteome</keyword>
<keyword id="KW-0694">RNA-binding</keyword>
<keyword id="KW-0820">tRNA-binding</keyword>
<keyword id="KW-0862">Zinc</keyword>
<comment type="function">
    <text evidence="1">Catalyzes the attachment of threonine to tRNA(Thr) in a two-step reaction: L-threonine is first activated by ATP to form Thr-AMP and then transferred to the acceptor end of tRNA(Thr). Also edits incorrectly charged L-seryl-tRNA(Thr).</text>
</comment>
<comment type="catalytic activity">
    <reaction evidence="1">
        <text>tRNA(Thr) + L-threonine + ATP = L-threonyl-tRNA(Thr) + AMP + diphosphate + H(+)</text>
        <dbReference type="Rhea" id="RHEA:24624"/>
        <dbReference type="Rhea" id="RHEA-COMP:9670"/>
        <dbReference type="Rhea" id="RHEA-COMP:9704"/>
        <dbReference type="ChEBI" id="CHEBI:15378"/>
        <dbReference type="ChEBI" id="CHEBI:30616"/>
        <dbReference type="ChEBI" id="CHEBI:33019"/>
        <dbReference type="ChEBI" id="CHEBI:57926"/>
        <dbReference type="ChEBI" id="CHEBI:78442"/>
        <dbReference type="ChEBI" id="CHEBI:78534"/>
        <dbReference type="ChEBI" id="CHEBI:456215"/>
        <dbReference type="EC" id="6.1.1.3"/>
    </reaction>
</comment>
<comment type="cofactor">
    <cofactor evidence="1">
        <name>Zn(2+)</name>
        <dbReference type="ChEBI" id="CHEBI:29105"/>
    </cofactor>
    <text evidence="1">Binds 1 zinc ion per subunit.</text>
</comment>
<comment type="subunit">
    <text evidence="1">Homodimer.</text>
</comment>
<comment type="subcellular location">
    <subcellularLocation>
        <location evidence="1">Cytoplasm</location>
    </subcellularLocation>
</comment>
<comment type="similarity">
    <text evidence="1">Belongs to the class-II aminoacyl-tRNA synthetase family.</text>
</comment>
<organism>
    <name type="scientific">Teredinibacter turnerae (strain ATCC 39867 / T7901)</name>
    <dbReference type="NCBI Taxonomy" id="377629"/>
    <lineage>
        <taxon>Bacteria</taxon>
        <taxon>Pseudomonadati</taxon>
        <taxon>Pseudomonadota</taxon>
        <taxon>Gammaproteobacteria</taxon>
        <taxon>Cellvibrionales</taxon>
        <taxon>Cellvibrionaceae</taxon>
        <taxon>Teredinibacter</taxon>
    </lineage>
</organism>
<protein>
    <recommendedName>
        <fullName evidence="1">Threonine--tRNA ligase</fullName>
        <ecNumber evidence="1">6.1.1.3</ecNumber>
    </recommendedName>
    <alternativeName>
        <fullName evidence="1">Threonyl-tRNA synthetase</fullName>
        <shortName evidence="1">ThrRS</shortName>
    </alternativeName>
</protein>
<proteinExistence type="inferred from homology"/>
<reference key="1">
    <citation type="journal article" date="2009" name="PLoS ONE">
        <title>The complete genome of Teredinibacter turnerae T7901: an intracellular endosymbiont of marine wood-boring bivalves (shipworms).</title>
        <authorList>
            <person name="Yang J.C."/>
            <person name="Madupu R."/>
            <person name="Durkin A.S."/>
            <person name="Ekborg N.A."/>
            <person name="Pedamallu C.S."/>
            <person name="Hostetler J.B."/>
            <person name="Radune D."/>
            <person name="Toms B.S."/>
            <person name="Henrissat B."/>
            <person name="Coutinho P.M."/>
            <person name="Schwarz S."/>
            <person name="Field L."/>
            <person name="Trindade-Silva A.E."/>
            <person name="Soares C.A.G."/>
            <person name="Elshahawi S."/>
            <person name="Hanora A."/>
            <person name="Schmidt E.W."/>
            <person name="Haygood M.G."/>
            <person name="Posfai J."/>
            <person name="Benner J."/>
            <person name="Madinger C."/>
            <person name="Nove J."/>
            <person name="Anton B."/>
            <person name="Chaudhary K."/>
            <person name="Foster J."/>
            <person name="Holman A."/>
            <person name="Kumar S."/>
            <person name="Lessard P.A."/>
            <person name="Luyten Y.A."/>
            <person name="Slatko B."/>
            <person name="Wood N."/>
            <person name="Wu B."/>
            <person name="Teplitski M."/>
            <person name="Mougous J.D."/>
            <person name="Ward N."/>
            <person name="Eisen J.A."/>
            <person name="Badger J.H."/>
            <person name="Distel D.L."/>
        </authorList>
    </citation>
    <scope>NUCLEOTIDE SEQUENCE [LARGE SCALE GENOMIC DNA]</scope>
    <source>
        <strain>ATCC 39867 / T7901</strain>
    </source>
</reference>
<sequence>MPVITLPNGSKREFSNPITVLDVAADIGPGLAKATLAGIVDGKEVDAGFTIEQDAALSIVTEKSPEGLEVIRHSTAHLLAQAVKSLFPEAQVTIGPVIDDGFYYDFAYSRAFTPEDLAAIEKKMTELSEQDIPVSRRVLPRDEAVAFFRGIGEDYKAEIIESIPANEDLSLYKQGDFEDLCRGPHVPSTGKLKYFKLMKVAGAYWRGDAKNEMLQRIYGTAWANKKDLKAYLHRLEEAEKRDHRKLGKKFDLFHLQEEAPGMVFWHPKGWSVYTAIEQYMRKVQRENGYKEIKTPQVVDRSLWERSGHWDKFRDGMFTVESESRDYAVKPMNCPCHIQVFNQGLKSYRDLPLRFAEFGSCHRNEASGTLQGIMRVRAFTQDDGHIFCAEDAIQSEVSIFTDLLYEVYRDFGFEDVIIRLSTRPEQRVGSEEVWDKSEKALADALNAKGLAFEYLPGEGAFYGPKIEFSLKDCIGRVWQCGTIQVDFSMPARLDAQFVAEDGSRQVPVMLHRAILGSFERFIGILIENYEGAFPPWLAPEQVVVMNITDNQAEYAEKVRNSLQNEGFRVVSDLRNEKIGFKIREHTIQKVPYLLVVGDQEMENNSVAVRTREGKDLGTYSVDDFATLLADSVAKRGRA</sequence>
<dbReference type="EC" id="6.1.1.3" evidence="1"/>
<dbReference type="EMBL" id="CP001614">
    <property type="protein sequence ID" value="ACR11668.1"/>
    <property type="molecule type" value="Genomic_DNA"/>
</dbReference>
<dbReference type="RefSeq" id="WP_015817780.1">
    <property type="nucleotide sequence ID" value="NC_012997.1"/>
</dbReference>
<dbReference type="SMR" id="C5BSQ1"/>
<dbReference type="STRING" id="377629.TERTU_1452"/>
<dbReference type="KEGG" id="ttu:TERTU_1452"/>
<dbReference type="eggNOG" id="COG0441">
    <property type="taxonomic scope" value="Bacteria"/>
</dbReference>
<dbReference type="HOGENOM" id="CLU_008554_0_1_6"/>
<dbReference type="OrthoDB" id="9802304at2"/>
<dbReference type="Proteomes" id="UP000009080">
    <property type="component" value="Chromosome"/>
</dbReference>
<dbReference type="GO" id="GO:0005829">
    <property type="term" value="C:cytosol"/>
    <property type="evidence" value="ECO:0007669"/>
    <property type="project" value="TreeGrafter"/>
</dbReference>
<dbReference type="GO" id="GO:0005524">
    <property type="term" value="F:ATP binding"/>
    <property type="evidence" value="ECO:0007669"/>
    <property type="project" value="UniProtKB-UniRule"/>
</dbReference>
<dbReference type="GO" id="GO:0046872">
    <property type="term" value="F:metal ion binding"/>
    <property type="evidence" value="ECO:0007669"/>
    <property type="project" value="UniProtKB-KW"/>
</dbReference>
<dbReference type="GO" id="GO:0004829">
    <property type="term" value="F:threonine-tRNA ligase activity"/>
    <property type="evidence" value="ECO:0007669"/>
    <property type="project" value="UniProtKB-UniRule"/>
</dbReference>
<dbReference type="GO" id="GO:0000049">
    <property type="term" value="F:tRNA binding"/>
    <property type="evidence" value="ECO:0007669"/>
    <property type="project" value="UniProtKB-KW"/>
</dbReference>
<dbReference type="GO" id="GO:0006435">
    <property type="term" value="P:threonyl-tRNA aminoacylation"/>
    <property type="evidence" value="ECO:0007669"/>
    <property type="project" value="UniProtKB-UniRule"/>
</dbReference>
<dbReference type="CDD" id="cd01667">
    <property type="entry name" value="TGS_ThrRS"/>
    <property type="match status" value="1"/>
</dbReference>
<dbReference type="CDD" id="cd00860">
    <property type="entry name" value="ThrRS_anticodon"/>
    <property type="match status" value="1"/>
</dbReference>
<dbReference type="CDD" id="cd00771">
    <property type="entry name" value="ThrRS_core"/>
    <property type="match status" value="1"/>
</dbReference>
<dbReference type="FunFam" id="3.10.20.30:FF:000005">
    <property type="entry name" value="Threonine--tRNA ligase"/>
    <property type="match status" value="1"/>
</dbReference>
<dbReference type="FunFam" id="3.30.54.20:FF:000002">
    <property type="entry name" value="Threonine--tRNA ligase"/>
    <property type="match status" value="1"/>
</dbReference>
<dbReference type="FunFam" id="3.30.930.10:FF:000002">
    <property type="entry name" value="Threonine--tRNA ligase"/>
    <property type="match status" value="1"/>
</dbReference>
<dbReference type="FunFam" id="3.40.50.800:FF:000001">
    <property type="entry name" value="Threonine--tRNA ligase"/>
    <property type="match status" value="1"/>
</dbReference>
<dbReference type="FunFam" id="3.30.980.10:FF:000005">
    <property type="entry name" value="Threonyl-tRNA synthetase, mitochondrial"/>
    <property type="match status" value="1"/>
</dbReference>
<dbReference type="Gene3D" id="3.10.20.30">
    <property type="match status" value="1"/>
</dbReference>
<dbReference type="Gene3D" id="3.30.54.20">
    <property type="match status" value="1"/>
</dbReference>
<dbReference type="Gene3D" id="3.40.50.800">
    <property type="entry name" value="Anticodon-binding domain"/>
    <property type="match status" value="1"/>
</dbReference>
<dbReference type="Gene3D" id="3.30.930.10">
    <property type="entry name" value="Bira Bifunctional Protein, Domain 2"/>
    <property type="match status" value="1"/>
</dbReference>
<dbReference type="Gene3D" id="3.30.980.10">
    <property type="entry name" value="Threonyl-trna Synthetase, Chain A, domain 2"/>
    <property type="match status" value="1"/>
</dbReference>
<dbReference type="HAMAP" id="MF_00184">
    <property type="entry name" value="Thr_tRNA_synth"/>
    <property type="match status" value="1"/>
</dbReference>
<dbReference type="InterPro" id="IPR002314">
    <property type="entry name" value="aa-tRNA-synt_IIb"/>
</dbReference>
<dbReference type="InterPro" id="IPR006195">
    <property type="entry name" value="aa-tRNA-synth_II"/>
</dbReference>
<dbReference type="InterPro" id="IPR045864">
    <property type="entry name" value="aa-tRNA-synth_II/BPL/LPL"/>
</dbReference>
<dbReference type="InterPro" id="IPR004154">
    <property type="entry name" value="Anticodon-bd"/>
</dbReference>
<dbReference type="InterPro" id="IPR036621">
    <property type="entry name" value="Anticodon-bd_dom_sf"/>
</dbReference>
<dbReference type="InterPro" id="IPR012675">
    <property type="entry name" value="Beta-grasp_dom_sf"/>
</dbReference>
<dbReference type="InterPro" id="IPR004095">
    <property type="entry name" value="TGS"/>
</dbReference>
<dbReference type="InterPro" id="IPR012676">
    <property type="entry name" value="TGS-like"/>
</dbReference>
<dbReference type="InterPro" id="IPR002320">
    <property type="entry name" value="Thr-tRNA-ligase_IIa"/>
</dbReference>
<dbReference type="InterPro" id="IPR018163">
    <property type="entry name" value="Thr/Ala-tRNA-synth_IIc_edit"/>
</dbReference>
<dbReference type="InterPro" id="IPR047246">
    <property type="entry name" value="ThrRS_anticodon"/>
</dbReference>
<dbReference type="InterPro" id="IPR033728">
    <property type="entry name" value="ThrRS_core"/>
</dbReference>
<dbReference type="InterPro" id="IPR012947">
    <property type="entry name" value="tRNA_SAD"/>
</dbReference>
<dbReference type="NCBIfam" id="TIGR00418">
    <property type="entry name" value="thrS"/>
    <property type="match status" value="1"/>
</dbReference>
<dbReference type="PANTHER" id="PTHR11451:SF44">
    <property type="entry name" value="THREONINE--TRNA LIGASE, CHLOROPLASTIC_MITOCHONDRIAL 2"/>
    <property type="match status" value="1"/>
</dbReference>
<dbReference type="PANTHER" id="PTHR11451">
    <property type="entry name" value="THREONINE-TRNA LIGASE"/>
    <property type="match status" value="1"/>
</dbReference>
<dbReference type="Pfam" id="PF03129">
    <property type="entry name" value="HGTP_anticodon"/>
    <property type="match status" value="1"/>
</dbReference>
<dbReference type="Pfam" id="PF02824">
    <property type="entry name" value="TGS"/>
    <property type="match status" value="1"/>
</dbReference>
<dbReference type="Pfam" id="PF00587">
    <property type="entry name" value="tRNA-synt_2b"/>
    <property type="match status" value="1"/>
</dbReference>
<dbReference type="Pfam" id="PF07973">
    <property type="entry name" value="tRNA_SAD"/>
    <property type="match status" value="1"/>
</dbReference>
<dbReference type="PRINTS" id="PR01047">
    <property type="entry name" value="TRNASYNTHTHR"/>
</dbReference>
<dbReference type="SMART" id="SM00863">
    <property type="entry name" value="tRNA_SAD"/>
    <property type="match status" value="1"/>
</dbReference>
<dbReference type="SUPFAM" id="SSF52954">
    <property type="entry name" value="Class II aaRS ABD-related"/>
    <property type="match status" value="1"/>
</dbReference>
<dbReference type="SUPFAM" id="SSF55681">
    <property type="entry name" value="Class II aaRS and biotin synthetases"/>
    <property type="match status" value="1"/>
</dbReference>
<dbReference type="SUPFAM" id="SSF81271">
    <property type="entry name" value="TGS-like"/>
    <property type="match status" value="1"/>
</dbReference>
<dbReference type="SUPFAM" id="SSF55186">
    <property type="entry name" value="ThrRS/AlaRS common domain"/>
    <property type="match status" value="1"/>
</dbReference>
<dbReference type="PROSITE" id="PS50862">
    <property type="entry name" value="AA_TRNA_LIGASE_II"/>
    <property type="match status" value="1"/>
</dbReference>
<dbReference type="PROSITE" id="PS51880">
    <property type="entry name" value="TGS"/>
    <property type="match status" value="1"/>
</dbReference>
<accession>C5BSQ1</accession>
<gene>
    <name evidence="1" type="primary">thrS</name>
    <name type="ordered locus">TERTU_1452</name>
</gene>
<evidence type="ECO:0000255" key="1">
    <source>
        <dbReference type="HAMAP-Rule" id="MF_00184"/>
    </source>
</evidence>
<evidence type="ECO:0000255" key="2">
    <source>
        <dbReference type="PROSITE-ProRule" id="PRU01228"/>
    </source>
</evidence>
<name>SYT_TERTT</name>